<accession>Q8RXS5</accession>
<accession>O04666</accession>
<accession>Q9FM50</accession>
<sequence length="888" mass="101801">MGGCVSVSISCDQLTKNVCSCLNRNGDYIHGLEENLTALQRALEQIEQRREDLLRKILSEERRGLQRLSVVQGWVSKVEAIVPRVNELVRMRSVQVQRLCLCGFCSKNLVSSYRYGKRVMKMIEEVEVLRYQGDFAVVAERVDAARVEERPTRPMVAMDPMLESAWNRLMEDEIGILGLHGMGGVGKTTLLSHINNRFSRVGGEFDIVIWIVVSKELQIQRIQDEIWEKLRSDNEKWKQKTEDIKASNIYNVLKHKRFVLLLDDIWSKVDLTEVGVPFPSRENGCKIVFTTRLKEICGRMGVDSDMEVRCLAPDDAWDLFTKKVGEITLGSHPEIPTVARTVAKKCRGLPLALNVIGETMAYKRTVQEWRSAIDVLTSSAAEFSGMEDEILPILKYSYDNLKSEQLKLCFQYCALFPEDHNIEKNDLVDYWIGEGFIDRNKGKAENQGYEIIGILVRSCLLMEENQETVKMHDVVREMALWIASDFGKQKENFIVQAGLQSRNIPEIEKWKVARRVSLMFNNIESIRDAPESPQLITLLLRKNFLGHISSSFFRLMPMLVVLDLSMNRDLRHLPNEISECVSLQYLSLSRTRIRIWPAGLVELRKLLYLNLEYTRMVESICGISGLTSLKVLRLFVSGFPEDPCVLNELQLLENLQTLTITLGLASILEQFLSNQRLASCTRALRIENLNPQSSVISFVATMDSLQELHFADSDIWEIKVKRNETVLPLHIPTTTTFFPNLSQVSLEFCTRLRDLTWLIFAPNLTVLRVISASDLKEVINKEKAEQQNLIPFQELKELRLENVQMLKHIHRGPLPFPCLQKILVNGCSELRKLPLNFTSVPRGDLVIEAHKKWIEILEWEDEATKARFLPTLKAFPENIDADGYEISF</sequence>
<name>DRL40_ARATH</name>
<comment type="function">
    <text evidence="1">Probable disease resistance protein.</text>
</comment>
<comment type="domain">
    <text evidence="1">The LRR repeats probably act as specificity determinant of pathogen recognition.</text>
</comment>
<comment type="similarity">
    <text evidence="3">Belongs to the disease resistance NB-LRR family.</text>
</comment>
<comment type="sequence caution" evidence="3">
    <conflict type="erroneous gene model prediction">
        <sequence resource="EMBL-CDS" id="BAB08845"/>
    </conflict>
</comment>
<comment type="online information" name="NIB-LRRS">
    <link uri="http://niblrrs.ucdavis.edu"/>
    <text>Functional and comparative genomics of disease resistance gene homologs</text>
</comment>
<reference key="1">
    <citation type="journal article" date="1998" name="DNA Res.">
        <title>Structural analysis of Arabidopsis thaliana chromosome 5. IV. Sequence features of the regions of 1,456,315 bp covered by nineteen physically assigned P1 and TAC clones.</title>
        <authorList>
            <person name="Sato S."/>
            <person name="Kaneko T."/>
            <person name="Kotani H."/>
            <person name="Nakamura Y."/>
            <person name="Asamizu E."/>
            <person name="Miyajima N."/>
            <person name="Tabata S."/>
        </authorList>
    </citation>
    <scope>NUCLEOTIDE SEQUENCE [LARGE SCALE GENOMIC DNA]</scope>
    <source>
        <strain>cv. Columbia</strain>
    </source>
</reference>
<reference key="2">
    <citation type="journal article" date="2017" name="Plant J.">
        <title>Araport11: a complete reannotation of the Arabidopsis thaliana reference genome.</title>
        <authorList>
            <person name="Cheng C.Y."/>
            <person name="Krishnakumar V."/>
            <person name="Chan A.P."/>
            <person name="Thibaud-Nissen F."/>
            <person name="Schobel S."/>
            <person name="Town C.D."/>
        </authorList>
    </citation>
    <scope>GENOME REANNOTATION</scope>
    <source>
        <strain>cv. Columbia</strain>
    </source>
</reference>
<reference key="3">
    <citation type="submission" date="1997-04" db="EMBL/GenBank/DDBJ databases">
        <title>Disease resistance gene homologous sequence.</title>
        <authorList>
            <person name="Speulman E."/>
            <person name="Beynon J."/>
        </authorList>
    </citation>
    <scope>NUCLEOTIDE SEQUENCE [GENOMIC DNA] OF 183-353</scope>
    <source>
        <strain>cv. Nd-1</strain>
    </source>
</reference>
<reference key="4">
    <citation type="journal article" date="2003" name="Science">
        <title>Empirical analysis of transcriptional activity in the Arabidopsis genome.</title>
        <authorList>
            <person name="Yamada K."/>
            <person name="Lim J."/>
            <person name="Dale J.M."/>
            <person name="Chen H."/>
            <person name="Shinn P."/>
            <person name="Palm C.J."/>
            <person name="Southwick A.M."/>
            <person name="Wu H.C."/>
            <person name="Kim C.J."/>
            <person name="Nguyen M."/>
            <person name="Pham P.K."/>
            <person name="Cheuk R.F."/>
            <person name="Karlin-Newmann G."/>
            <person name="Liu S.X."/>
            <person name="Lam B."/>
            <person name="Sakano H."/>
            <person name="Wu T."/>
            <person name="Yu G."/>
            <person name="Miranda M."/>
            <person name="Quach H.L."/>
            <person name="Tripp M."/>
            <person name="Chang C.H."/>
            <person name="Lee J.M."/>
            <person name="Toriumi M.J."/>
            <person name="Chan M.M."/>
            <person name="Tang C.C."/>
            <person name="Onodera C.S."/>
            <person name="Deng J.M."/>
            <person name="Akiyama K."/>
            <person name="Ansari Y."/>
            <person name="Arakawa T."/>
            <person name="Banh J."/>
            <person name="Banno F."/>
            <person name="Bowser L."/>
            <person name="Brooks S.Y."/>
            <person name="Carninci P."/>
            <person name="Chao Q."/>
            <person name="Choy N."/>
            <person name="Enju A."/>
            <person name="Goldsmith A.D."/>
            <person name="Gurjal M."/>
            <person name="Hansen N.F."/>
            <person name="Hayashizaki Y."/>
            <person name="Johnson-Hopson C."/>
            <person name="Hsuan V.W."/>
            <person name="Iida K."/>
            <person name="Karnes M."/>
            <person name="Khan S."/>
            <person name="Koesema E."/>
            <person name="Ishida J."/>
            <person name="Jiang P.X."/>
            <person name="Jones T."/>
            <person name="Kawai J."/>
            <person name="Kamiya A."/>
            <person name="Meyers C."/>
            <person name="Nakajima M."/>
            <person name="Narusaka M."/>
            <person name="Seki M."/>
            <person name="Sakurai T."/>
            <person name="Satou M."/>
            <person name="Tamse R."/>
            <person name="Vaysberg M."/>
            <person name="Wallender E.K."/>
            <person name="Wong C."/>
            <person name="Yamamura Y."/>
            <person name="Yuan S."/>
            <person name="Shinozaki K."/>
            <person name="Davis R.W."/>
            <person name="Theologis A."/>
            <person name="Ecker J.R."/>
        </authorList>
    </citation>
    <scope>NUCLEOTIDE SEQUENCE [LARGE SCALE MRNA] OF 302-888</scope>
    <source>
        <strain>cv. Columbia</strain>
    </source>
</reference>
<proteinExistence type="evidence at transcript level"/>
<evidence type="ECO:0000250" key="1"/>
<evidence type="ECO:0000255" key="2"/>
<evidence type="ECO:0000305" key="3"/>
<keyword id="KW-0067">ATP-binding</keyword>
<keyword id="KW-0175">Coiled coil</keyword>
<keyword id="KW-0433">Leucine-rich repeat</keyword>
<keyword id="KW-0547">Nucleotide-binding</keyword>
<keyword id="KW-0611">Plant defense</keyword>
<keyword id="KW-1185">Reference proteome</keyword>
<keyword id="KW-0677">Repeat</keyword>
<dbReference type="EMBL" id="AB009051">
    <property type="protein sequence ID" value="BAB08845.1"/>
    <property type="status" value="ALT_SEQ"/>
    <property type="molecule type" value="Genomic_DNA"/>
</dbReference>
<dbReference type="EMBL" id="CP002688">
    <property type="protein sequence ID" value="AED97687.1"/>
    <property type="molecule type" value="Genomic_DNA"/>
</dbReference>
<dbReference type="EMBL" id="U97223">
    <property type="protein sequence ID" value="AAB61688.1"/>
    <property type="molecule type" value="Genomic_DNA"/>
</dbReference>
<dbReference type="EMBL" id="AY080696">
    <property type="protein sequence ID" value="AAL86316.1"/>
    <property type="molecule type" value="mRNA"/>
</dbReference>
<dbReference type="RefSeq" id="NP_201107.2">
    <property type="nucleotide sequence ID" value="NM_125696.4"/>
</dbReference>
<dbReference type="SMR" id="Q8RXS5"/>
<dbReference type="FunCoup" id="Q8RXS5">
    <property type="interactions" value="205"/>
</dbReference>
<dbReference type="STRING" id="3702.Q8RXS5"/>
<dbReference type="iPTMnet" id="Q8RXS5"/>
<dbReference type="PaxDb" id="3702-AT5G63020.1"/>
<dbReference type="ProteomicsDB" id="224339"/>
<dbReference type="EnsemblPlants" id="AT5G63020.1">
    <property type="protein sequence ID" value="AT5G63020.1"/>
    <property type="gene ID" value="AT5G63020"/>
</dbReference>
<dbReference type="GeneID" id="836422"/>
<dbReference type="Gramene" id="AT5G63020.1">
    <property type="protein sequence ID" value="AT5G63020.1"/>
    <property type="gene ID" value="AT5G63020"/>
</dbReference>
<dbReference type="KEGG" id="ath:AT5G63020"/>
<dbReference type="Araport" id="AT5G63020"/>
<dbReference type="TAIR" id="AT5G63020">
    <property type="gene designation" value="SUT1"/>
</dbReference>
<dbReference type="eggNOG" id="KOG4658">
    <property type="taxonomic scope" value="Eukaryota"/>
</dbReference>
<dbReference type="HOGENOM" id="CLU_000427_4_0_1"/>
<dbReference type="InParanoid" id="Q8RXS5"/>
<dbReference type="OMA" id="CCNLENV"/>
<dbReference type="OrthoDB" id="1101056at2759"/>
<dbReference type="PhylomeDB" id="Q8RXS5"/>
<dbReference type="PRO" id="PR:Q8RXS5"/>
<dbReference type="Proteomes" id="UP000006548">
    <property type="component" value="Chromosome 5"/>
</dbReference>
<dbReference type="ExpressionAtlas" id="Q8RXS5">
    <property type="expression patterns" value="baseline and differential"/>
</dbReference>
<dbReference type="GO" id="GO:0005737">
    <property type="term" value="C:cytoplasm"/>
    <property type="evidence" value="ECO:0000314"/>
    <property type="project" value="TAIR"/>
</dbReference>
<dbReference type="GO" id="GO:0005886">
    <property type="term" value="C:plasma membrane"/>
    <property type="evidence" value="ECO:0000314"/>
    <property type="project" value="TAIR"/>
</dbReference>
<dbReference type="GO" id="GO:0043531">
    <property type="term" value="F:ADP binding"/>
    <property type="evidence" value="ECO:0007669"/>
    <property type="project" value="InterPro"/>
</dbReference>
<dbReference type="GO" id="GO:0005524">
    <property type="term" value="F:ATP binding"/>
    <property type="evidence" value="ECO:0007669"/>
    <property type="project" value="UniProtKB-KW"/>
</dbReference>
<dbReference type="GO" id="GO:0006952">
    <property type="term" value="P:defense response"/>
    <property type="evidence" value="ECO:0007669"/>
    <property type="project" value="UniProtKB-KW"/>
</dbReference>
<dbReference type="FunFam" id="3.80.10.10:FF:000861">
    <property type="entry name" value="Disease resistance protein (CC-NBS-LRR class) family"/>
    <property type="match status" value="1"/>
</dbReference>
<dbReference type="FunFam" id="3.40.50.300:FF:001091">
    <property type="entry name" value="Probable disease resistance protein At1g61300"/>
    <property type="match status" value="1"/>
</dbReference>
<dbReference type="FunFam" id="1.10.10.10:FF:000322">
    <property type="entry name" value="Probable disease resistance protein At1g63360"/>
    <property type="match status" value="1"/>
</dbReference>
<dbReference type="FunFam" id="3.80.10.10:FF:000799">
    <property type="entry name" value="Probable disease resistance protein At5g63020"/>
    <property type="match status" value="1"/>
</dbReference>
<dbReference type="FunFam" id="1.10.8.430:FF:000003">
    <property type="entry name" value="Probable disease resistance protein At5g66910"/>
    <property type="match status" value="1"/>
</dbReference>
<dbReference type="Gene3D" id="1.10.8.430">
    <property type="entry name" value="Helical domain of apoptotic protease-activating factors"/>
    <property type="match status" value="1"/>
</dbReference>
<dbReference type="Gene3D" id="3.40.50.300">
    <property type="entry name" value="P-loop containing nucleotide triphosphate hydrolases"/>
    <property type="match status" value="1"/>
</dbReference>
<dbReference type="Gene3D" id="3.80.10.10">
    <property type="entry name" value="Ribonuclease Inhibitor"/>
    <property type="match status" value="2"/>
</dbReference>
<dbReference type="Gene3D" id="1.10.10.10">
    <property type="entry name" value="Winged helix-like DNA-binding domain superfamily/Winged helix DNA-binding domain"/>
    <property type="match status" value="1"/>
</dbReference>
<dbReference type="InterPro" id="IPR042197">
    <property type="entry name" value="Apaf_helical"/>
</dbReference>
<dbReference type="InterPro" id="IPR032675">
    <property type="entry name" value="LRR_dom_sf"/>
</dbReference>
<dbReference type="InterPro" id="IPR055414">
    <property type="entry name" value="LRR_R13L4/SHOC2-like"/>
</dbReference>
<dbReference type="InterPro" id="IPR002182">
    <property type="entry name" value="NB-ARC"/>
</dbReference>
<dbReference type="InterPro" id="IPR027417">
    <property type="entry name" value="P-loop_NTPase"/>
</dbReference>
<dbReference type="InterPro" id="IPR050905">
    <property type="entry name" value="Plant_NBS-LRR"/>
</dbReference>
<dbReference type="InterPro" id="IPR036388">
    <property type="entry name" value="WH-like_DNA-bd_sf"/>
</dbReference>
<dbReference type="PANTHER" id="PTHR33463:SF220">
    <property type="entry name" value="NB-ARC DOMAIN-CONTAINING PROTEIN"/>
    <property type="match status" value="1"/>
</dbReference>
<dbReference type="PANTHER" id="PTHR33463">
    <property type="entry name" value="NB-ARC DOMAIN-CONTAINING PROTEIN-RELATED"/>
    <property type="match status" value="1"/>
</dbReference>
<dbReference type="Pfam" id="PF23598">
    <property type="entry name" value="LRR_14"/>
    <property type="match status" value="1"/>
</dbReference>
<dbReference type="Pfam" id="PF00931">
    <property type="entry name" value="NB-ARC"/>
    <property type="match status" value="1"/>
</dbReference>
<dbReference type="Pfam" id="PF23559">
    <property type="entry name" value="WH_DRP"/>
    <property type="match status" value="1"/>
</dbReference>
<dbReference type="PRINTS" id="PR00364">
    <property type="entry name" value="DISEASERSIST"/>
</dbReference>
<dbReference type="SUPFAM" id="SSF52058">
    <property type="entry name" value="L domain-like"/>
    <property type="match status" value="1"/>
</dbReference>
<dbReference type="SUPFAM" id="SSF52540">
    <property type="entry name" value="P-loop containing nucleoside triphosphate hydrolases"/>
    <property type="match status" value="1"/>
</dbReference>
<feature type="chain" id="PRO_0000212772" description="Probable disease resistance protein At5g63020">
    <location>
        <begin position="1"/>
        <end position="888"/>
    </location>
</feature>
<feature type="domain" description="NB-ARC">
    <location>
        <begin position="139"/>
        <end position="442"/>
    </location>
</feature>
<feature type="repeat" description="LRR 1">
    <location>
        <begin position="512"/>
        <end position="533"/>
    </location>
</feature>
<feature type="repeat" description="LRR 2">
    <location>
        <begin position="534"/>
        <end position="555"/>
    </location>
</feature>
<feature type="repeat" description="LRR 3">
    <location>
        <begin position="558"/>
        <end position="580"/>
    </location>
</feature>
<feature type="repeat" description="LRR 4">
    <location>
        <begin position="582"/>
        <end position="604"/>
    </location>
</feature>
<feature type="repeat" description="LRR 5">
    <location>
        <begin position="605"/>
        <end position="627"/>
    </location>
</feature>
<feature type="coiled-coil region" evidence="2">
    <location>
        <begin position="22"/>
        <end position="66"/>
    </location>
</feature>
<feature type="binding site" evidence="2">
    <location>
        <begin position="181"/>
        <end position="188"/>
    </location>
    <ligand>
        <name>ATP</name>
        <dbReference type="ChEBI" id="CHEBI:30616"/>
    </ligand>
</feature>
<feature type="sequence conflict" description="In Ref. 3; AAB61688." evidence="3" ref="3">
    <original>E</original>
    <variation>G</variation>
    <location>
        <position position="242"/>
    </location>
</feature>
<feature type="sequence conflict" description="In Ref. 3; AAB61688." evidence="3" ref="3">
    <original>V</original>
    <variation>L</variation>
    <location>
        <position position="338"/>
    </location>
</feature>
<gene>
    <name type="ordered locus">At5g63020</name>
    <name type="ORF">MJH22.8</name>
</gene>
<protein>
    <recommendedName>
        <fullName>Probable disease resistance protein At5g63020</fullName>
    </recommendedName>
    <alternativeName>
        <fullName>pNd11</fullName>
    </alternativeName>
</protein>
<organism>
    <name type="scientific">Arabidopsis thaliana</name>
    <name type="common">Mouse-ear cress</name>
    <dbReference type="NCBI Taxonomy" id="3702"/>
    <lineage>
        <taxon>Eukaryota</taxon>
        <taxon>Viridiplantae</taxon>
        <taxon>Streptophyta</taxon>
        <taxon>Embryophyta</taxon>
        <taxon>Tracheophyta</taxon>
        <taxon>Spermatophyta</taxon>
        <taxon>Magnoliopsida</taxon>
        <taxon>eudicotyledons</taxon>
        <taxon>Gunneridae</taxon>
        <taxon>Pentapetalae</taxon>
        <taxon>rosids</taxon>
        <taxon>malvids</taxon>
        <taxon>Brassicales</taxon>
        <taxon>Brassicaceae</taxon>
        <taxon>Camelineae</taxon>
        <taxon>Arabidopsis</taxon>
    </lineage>
</organism>